<accession>Q66CI2</accession>
<dbReference type="EC" id="2.7.1.130" evidence="1"/>
<dbReference type="EMBL" id="BX936398">
    <property type="protein sequence ID" value="CAH20661.1"/>
    <property type="molecule type" value="Genomic_DNA"/>
</dbReference>
<dbReference type="RefSeq" id="WP_002211319.1">
    <property type="nucleotide sequence ID" value="NZ_CP009712.1"/>
</dbReference>
<dbReference type="SMR" id="Q66CI2"/>
<dbReference type="GeneID" id="57977192"/>
<dbReference type="KEGG" id="ypo:BZ17_1096"/>
<dbReference type="KEGG" id="yps:YPTB1421"/>
<dbReference type="PATRIC" id="fig|273123.14.peg.1164"/>
<dbReference type="UniPathway" id="UPA00359">
    <property type="reaction ID" value="UER00482"/>
</dbReference>
<dbReference type="Proteomes" id="UP000001011">
    <property type="component" value="Chromosome"/>
</dbReference>
<dbReference type="GO" id="GO:0005886">
    <property type="term" value="C:plasma membrane"/>
    <property type="evidence" value="ECO:0007669"/>
    <property type="project" value="TreeGrafter"/>
</dbReference>
<dbReference type="GO" id="GO:0005524">
    <property type="term" value="F:ATP binding"/>
    <property type="evidence" value="ECO:0007669"/>
    <property type="project" value="UniProtKB-UniRule"/>
</dbReference>
<dbReference type="GO" id="GO:0009029">
    <property type="term" value="F:tetraacyldisaccharide 4'-kinase activity"/>
    <property type="evidence" value="ECO:0007669"/>
    <property type="project" value="UniProtKB-UniRule"/>
</dbReference>
<dbReference type="GO" id="GO:0009245">
    <property type="term" value="P:lipid A biosynthetic process"/>
    <property type="evidence" value="ECO:0007669"/>
    <property type="project" value="UniProtKB-UniRule"/>
</dbReference>
<dbReference type="GO" id="GO:0009244">
    <property type="term" value="P:lipopolysaccharide core region biosynthetic process"/>
    <property type="evidence" value="ECO:0007669"/>
    <property type="project" value="TreeGrafter"/>
</dbReference>
<dbReference type="Gene3D" id="3.40.50.300">
    <property type="entry name" value="P-loop containing nucleotide triphosphate hydrolases"/>
    <property type="match status" value="1"/>
</dbReference>
<dbReference type="HAMAP" id="MF_00409">
    <property type="entry name" value="LpxK"/>
    <property type="match status" value="1"/>
</dbReference>
<dbReference type="InterPro" id="IPR003758">
    <property type="entry name" value="LpxK"/>
</dbReference>
<dbReference type="InterPro" id="IPR027417">
    <property type="entry name" value="P-loop_NTPase"/>
</dbReference>
<dbReference type="NCBIfam" id="TIGR00682">
    <property type="entry name" value="lpxK"/>
    <property type="match status" value="1"/>
</dbReference>
<dbReference type="PANTHER" id="PTHR42724">
    <property type="entry name" value="TETRAACYLDISACCHARIDE 4'-KINASE"/>
    <property type="match status" value="1"/>
</dbReference>
<dbReference type="PANTHER" id="PTHR42724:SF1">
    <property type="entry name" value="TETRAACYLDISACCHARIDE 4'-KINASE, MITOCHONDRIAL-RELATED"/>
    <property type="match status" value="1"/>
</dbReference>
<dbReference type="Pfam" id="PF02606">
    <property type="entry name" value="LpxK"/>
    <property type="match status" value="1"/>
</dbReference>
<dbReference type="SUPFAM" id="SSF52540">
    <property type="entry name" value="P-loop containing nucleoside triphosphate hydrolases"/>
    <property type="match status" value="1"/>
</dbReference>
<proteinExistence type="inferred from homology"/>
<name>LPXK_YERPS</name>
<reference key="1">
    <citation type="journal article" date="2004" name="Proc. Natl. Acad. Sci. U.S.A.">
        <title>Insights into the evolution of Yersinia pestis through whole-genome comparison with Yersinia pseudotuberculosis.</title>
        <authorList>
            <person name="Chain P.S.G."/>
            <person name="Carniel E."/>
            <person name="Larimer F.W."/>
            <person name="Lamerdin J."/>
            <person name="Stoutland P.O."/>
            <person name="Regala W.M."/>
            <person name="Georgescu A.M."/>
            <person name="Vergez L.M."/>
            <person name="Land M.L."/>
            <person name="Motin V.L."/>
            <person name="Brubaker R.R."/>
            <person name="Fowler J."/>
            <person name="Hinnebusch J."/>
            <person name="Marceau M."/>
            <person name="Medigue C."/>
            <person name="Simonet M."/>
            <person name="Chenal-Francisque V."/>
            <person name="Souza B."/>
            <person name="Dacheux D."/>
            <person name="Elliott J.M."/>
            <person name="Derbise A."/>
            <person name="Hauser L.J."/>
            <person name="Garcia E."/>
        </authorList>
    </citation>
    <scope>NUCLEOTIDE SEQUENCE [LARGE SCALE GENOMIC DNA]</scope>
    <source>
        <strain>IP32953</strain>
    </source>
</reference>
<gene>
    <name evidence="1" type="primary">lpxK</name>
    <name type="ordered locus">YPTB1421</name>
</gene>
<feature type="chain" id="PRO_0000229991" description="Tetraacyldisaccharide 4'-kinase">
    <location>
        <begin position="1"/>
        <end position="328"/>
    </location>
</feature>
<feature type="binding site" evidence="1">
    <location>
        <begin position="55"/>
        <end position="62"/>
    </location>
    <ligand>
        <name>ATP</name>
        <dbReference type="ChEBI" id="CHEBI:30616"/>
    </ligand>
</feature>
<protein>
    <recommendedName>
        <fullName evidence="1">Tetraacyldisaccharide 4'-kinase</fullName>
        <ecNumber evidence="1">2.7.1.130</ecNumber>
    </recommendedName>
    <alternativeName>
        <fullName evidence="1">Lipid A 4'-kinase</fullName>
    </alternativeName>
</protein>
<keyword id="KW-0067">ATP-binding</keyword>
<keyword id="KW-0418">Kinase</keyword>
<keyword id="KW-0441">Lipid A biosynthesis</keyword>
<keyword id="KW-0444">Lipid biosynthesis</keyword>
<keyword id="KW-0443">Lipid metabolism</keyword>
<keyword id="KW-0547">Nucleotide-binding</keyword>
<keyword id="KW-0808">Transferase</keyword>
<sequence length="328" mass="36139">MIERIWSGQSRLYLLLLPLSWLYGAVTWLIRASYRLGLRSAWRSPVPVIIVGNLTAGGNGKTPVVIWLVEQLQQRGYRVGVVSRGYGGKSAVYPLLLSDNTTTAQAGDEPVLIFQRTGAPVAVSPKRADAIKALLQSHAVDFIITDDGLQHYALQRDFELVVIDGVRRFGNGWWLPAGPMREREGRLRSVDAAITNGGLAAEGEIPMQLVAREAVNLVTGQRQPAEQLQHVVAMAGIGHPPRFFATLNLLGIKPENEHAFADHQDYSLAQLSRLTSGPQILLMTEKDAVKCRAFALPNWWYLPVDAQLPSDRADKLLLNIQALSPDTK</sequence>
<organism>
    <name type="scientific">Yersinia pseudotuberculosis serotype I (strain IP32953)</name>
    <dbReference type="NCBI Taxonomy" id="273123"/>
    <lineage>
        <taxon>Bacteria</taxon>
        <taxon>Pseudomonadati</taxon>
        <taxon>Pseudomonadota</taxon>
        <taxon>Gammaproteobacteria</taxon>
        <taxon>Enterobacterales</taxon>
        <taxon>Yersiniaceae</taxon>
        <taxon>Yersinia</taxon>
    </lineage>
</organism>
<evidence type="ECO:0000255" key="1">
    <source>
        <dbReference type="HAMAP-Rule" id="MF_00409"/>
    </source>
</evidence>
<comment type="function">
    <text evidence="1">Transfers the gamma-phosphate of ATP to the 4'-position of a tetraacyldisaccharide 1-phosphate intermediate (termed DS-1-P) to form tetraacyldisaccharide 1,4'-bis-phosphate (lipid IVA).</text>
</comment>
<comment type="catalytic activity">
    <reaction evidence="1">
        <text>a lipid A disaccharide + ATP = a lipid IVA + ADP + H(+)</text>
        <dbReference type="Rhea" id="RHEA:67840"/>
        <dbReference type="ChEBI" id="CHEBI:15378"/>
        <dbReference type="ChEBI" id="CHEBI:30616"/>
        <dbReference type="ChEBI" id="CHEBI:176343"/>
        <dbReference type="ChEBI" id="CHEBI:176425"/>
        <dbReference type="ChEBI" id="CHEBI:456216"/>
        <dbReference type="EC" id="2.7.1.130"/>
    </reaction>
</comment>
<comment type="pathway">
    <text evidence="1">Glycolipid biosynthesis; lipid IV(A) biosynthesis; lipid IV(A) from (3R)-3-hydroxytetradecanoyl-[acyl-carrier-protein] and UDP-N-acetyl-alpha-D-glucosamine: step 6/6.</text>
</comment>
<comment type="similarity">
    <text evidence="1">Belongs to the LpxK family.</text>
</comment>